<sequence length="415" mass="45922">MSLEAIRFARSDPTNVQVSVLDQLLLPYLTKYLPIYTISDGYAVIKSMQVRGAPAIAIVGSLSILMESQMMLSNSFDQTQWFYDLLDWEDTRSKLTGRLDYLLSSRPTAVNLSNALKEIAQILKETNDLKQFNSELYNYVCKLIDEDLSNNIKMGDNGAKFLLESLSKEGFNEEFAVLTICNTGSLATSGYGTALGVIRSLWNDSKSKDPKVNTDGSLKPLASADSKMKHVFPLETRPYNQGSRLTAYELVHDEIPATLITDSSVTYRIKTSPYPIKAAFVGADRIVRNGDTANKIGTFQLAIICKQFGIKFFVVAPKTTIDNVTPNGDGIVVEERKPNEMKLVTGTLMNYDEETPALNVSNEPVSAKIGIAPSQINVWNPAFDITPHEFIDGIVTEEGVFTKDESGKFDLTSLF</sequence>
<proteinExistence type="inferred from homology"/>
<organism>
    <name type="scientific">Vanderwaltozyma polyspora (strain ATCC 22028 / DSM 70294 / BCRC 21397 / CBS 2163 / NBRC 10782 / NRRL Y-8283 / UCD 57-17)</name>
    <name type="common">Kluyveromyces polysporus</name>
    <dbReference type="NCBI Taxonomy" id="436907"/>
    <lineage>
        <taxon>Eukaryota</taxon>
        <taxon>Fungi</taxon>
        <taxon>Dikarya</taxon>
        <taxon>Ascomycota</taxon>
        <taxon>Saccharomycotina</taxon>
        <taxon>Saccharomycetes</taxon>
        <taxon>Saccharomycetales</taxon>
        <taxon>Saccharomycetaceae</taxon>
        <taxon>Vanderwaltozyma</taxon>
    </lineage>
</organism>
<comment type="function">
    <text evidence="1">Catalyzes the interconversion of methylthioribose-1-phosphate (MTR-1-P) into methylthioribulose-1-phosphate (MTRu-1-P).</text>
</comment>
<comment type="catalytic activity">
    <reaction evidence="1">
        <text>5-(methylsulfanyl)-alpha-D-ribose 1-phosphate = 5-(methylsulfanyl)-D-ribulose 1-phosphate</text>
        <dbReference type="Rhea" id="RHEA:19989"/>
        <dbReference type="ChEBI" id="CHEBI:58533"/>
        <dbReference type="ChEBI" id="CHEBI:58548"/>
        <dbReference type="EC" id="5.3.1.23"/>
    </reaction>
</comment>
<comment type="pathway">
    <text evidence="1">Amino-acid biosynthesis; L-methionine biosynthesis via salvage pathway; L-methionine from S-methyl-5-thio-alpha-D-ribose 1-phosphate: step 1/6.</text>
</comment>
<comment type="subcellular location">
    <subcellularLocation>
        <location evidence="1">Cytoplasm</location>
    </subcellularLocation>
    <subcellularLocation>
        <location evidence="1">Nucleus</location>
    </subcellularLocation>
</comment>
<comment type="similarity">
    <text evidence="1">Belongs to the eIF-2B alpha/beta/delta subunits family. MtnA subfamily.</text>
</comment>
<name>MTNA_VANPO</name>
<feature type="chain" id="PRO_0000402057" description="Methylthioribose-1-phosphate isomerase">
    <location>
        <begin position="1"/>
        <end position="415"/>
    </location>
</feature>
<feature type="active site" description="Proton donor" evidence="1">
    <location>
        <position position="284"/>
    </location>
</feature>
<feature type="site" description="Transition state stabilizer" evidence="1">
    <location>
        <position position="181"/>
    </location>
</feature>
<reference key="1">
    <citation type="journal article" date="2007" name="Proc. Natl. Acad. Sci. U.S.A.">
        <title>Independent sorting-out of thousands of duplicated gene pairs in two yeast species descended from a whole-genome duplication.</title>
        <authorList>
            <person name="Scannell D.R."/>
            <person name="Frank A.C."/>
            <person name="Conant G.C."/>
            <person name="Byrne K.P."/>
            <person name="Woolfit M."/>
            <person name="Wolfe K.H."/>
        </authorList>
    </citation>
    <scope>NUCLEOTIDE SEQUENCE [LARGE SCALE GENOMIC DNA]</scope>
    <source>
        <strain>ATCC 22028 / DSM 70294 / BCRC 21397 / CBS 2163 / NBRC 10782 / NRRL Y-8283 / UCD 57-17</strain>
    </source>
</reference>
<gene>
    <name evidence="1" type="primary">MRI1</name>
    <name type="ORF">Kpol_359p2</name>
</gene>
<evidence type="ECO:0000255" key="1">
    <source>
        <dbReference type="HAMAP-Rule" id="MF_03119"/>
    </source>
</evidence>
<accession>A7TSA5</accession>
<protein>
    <recommendedName>
        <fullName evidence="1">Methylthioribose-1-phosphate isomerase</fullName>
        <shortName evidence="1">M1Pi</shortName>
        <shortName evidence="1">MTR-1-P isomerase</shortName>
        <ecNumber evidence="1">5.3.1.23</ecNumber>
    </recommendedName>
    <alternativeName>
        <fullName evidence="1">S-methyl-5-thioribose-1-phosphate isomerase</fullName>
    </alternativeName>
    <alternativeName>
        <fullName evidence="1">Translation initiation factor eIF-2B subunit alpha/beta/delta-like protein</fullName>
    </alternativeName>
</protein>
<dbReference type="EC" id="5.3.1.23" evidence="1"/>
<dbReference type="EMBL" id="DS480504">
    <property type="protein sequence ID" value="EDO14842.1"/>
    <property type="molecule type" value="Genomic_DNA"/>
</dbReference>
<dbReference type="RefSeq" id="XP_001642700.1">
    <property type="nucleotide sequence ID" value="XM_001642650.1"/>
</dbReference>
<dbReference type="SMR" id="A7TSA5"/>
<dbReference type="FunCoup" id="A7TSA5">
    <property type="interactions" value="749"/>
</dbReference>
<dbReference type="STRING" id="436907.A7TSA5"/>
<dbReference type="GeneID" id="5542880"/>
<dbReference type="KEGG" id="vpo:Kpol_359p2"/>
<dbReference type="eggNOG" id="KOG1468">
    <property type="taxonomic scope" value="Eukaryota"/>
</dbReference>
<dbReference type="HOGENOM" id="CLU_016218_1_3_1"/>
<dbReference type="InParanoid" id="A7TSA5"/>
<dbReference type="OMA" id="CETRPLN"/>
<dbReference type="OrthoDB" id="2461at2759"/>
<dbReference type="PhylomeDB" id="A7TSA5"/>
<dbReference type="UniPathway" id="UPA00904">
    <property type="reaction ID" value="UER00874"/>
</dbReference>
<dbReference type="Proteomes" id="UP000000267">
    <property type="component" value="Unassembled WGS sequence"/>
</dbReference>
<dbReference type="GO" id="GO:0005737">
    <property type="term" value="C:cytoplasm"/>
    <property type="evidence" value="ECO:0007669"/>
    <property type="project" value="UniProtKB-SubCell"/>
</dbReference>
<dbReference type="GO" id="GO:0005634">
    <property type="term" value="C:nucleus"/>
    <property type="evidence" value="ECO:0007669"/>
    <property type="project" value="UniProtKB-SubCell"/>
</dbReference>
<dbReference type="GO" id="GO:0046523">
    <property type="term" value="F:S-methyl-5-thioribose-1-phosphate isomerase activity"/>
    <property type="evidence" value="ECO:0007669"/>
    <property type="project" value="UniProtKB-UniRule"/>
</dbReference>
<dbReference type="GO" id="GO:0019509">
    <property type="term" value="P:L-methionine salvage from methylthioadenosine"/>
    <property type="evidence" value="ECO:0007669"/>
    <property type="project" value="UniProtKB-UniRule"/>
</dbReference>
<dbReference type="FunFam" id="1.20.120.420:FF:000006">
    <property type="entry name" value="Methylthioribose-1-phosphate isomerase"/>
    <property type="match status" value="1"/>
</dbReference>
<dbReference type="Gene3D" id="1.20.120.420">
    <property type="entry name" value="translation initiation factor eif-2b, domain 1"/>
    <property type="match status" value="1"/>
</dbReference>
<dbReference type="Gene3D" id="3.40.50.10470">
    <property type="entry name" value="Translation initiation factor eif-2b, domain 2"/>
    <property type="match status" value="1"/>
</dbReference>
<dbReference type="HAMAP" id="MF_01678">
    <property type="entry name" value="Salvage_MtnA"/>
    <property type="match status" value="1"/>
</dbReference>
<dbReference type="InterPro" id="IPR000649">
    <property type="entry name" value="IF-2B-related"/>
</dbReference>
<dbReference type="InterPro" id="IPR005251">
    <property type="entry name" value="IF-M1Pi"/>
</dbReference>
<dbReference type="InterPro" id="IPR042529">
    <property type="entry name" value="IF_2B-like_C"/>
</dbReference>
<dbReference type="InterPro" id="IPR011559">
    <property type="entry name" value="Initiation_fac_2B_a/b/d"/>
</dbReference>
<dbReference type="InterPro" id="IPR027363">
    <property type="entry name" value="M1Pi_N"/>
</dbReference>
<dbReference type="InterPro" id="IPR037171">
    <property type="entry name" value="NagB/RpiA_transferase-like"/>
</dbReference>
<dbReference type="NCBIfam" id="TIGR00524">
    <property type="entry name" value="eIF-2B_rel"/>
    <property type="match status" value="1"/>
</dbReference>
<dbReference type="NCBIfam" id="TIGR00512">
    <property type="entry name" value="salvage_mtnA"/>
    <property type="match status" value="1"/>
</dbReference>
<dbReference type="PANTHER" id="PTHR43475">
    <property type="entry name" value="METHYLTHIORIBOSE-1-PHOSPHATE ISOMERASE"/>
    <property type="match status" value="1"/>
</dbReference>
<dbReference type="PANTHER" id="PTHR43475:SF1">
    <property type="entry name" value="METHYLTHIORIBOSE-1-PHOSPHATE ISOMERASE"/>
    <property type="match status" value="1"/>
</dbReference>
<dbReference type="Pfam" id="PF01008">
    <property type="entry name" value="IF-2B"/>
    <property type="match status" value="1"/>
</dbReference>
<dbReference type="SUPFAM" id="SSF100950">
    <property type="entry name" value="NagB/RpiA/CoA transferase-like"/>
    <property type="match status" value="1"/>
</dbReference>
<keyword id="KW-0028">Amino-acid biosynthesis</keyword>
<keyword id="KW-0963">Cytoplasm</keyword>
<keyword id="KW-0413">Isomerase</keyword>
<keyword id="KW-0486">Methionine biosynthesis</keyword>
<keyword id="KW-0539">Nucleus</keyword>
<keyword id="KW-1185">Reference proteome</keyword>